<feature type="chain" id="PRO_1000201965" description="Cobyric acid synthase">
    <location>
        <begin position="1"/>
        <end position="485"/>
    </location>
</feature>
<feature type="domain" description="GATase cobBQ-type" evidence="1">
    <location>
        <begin position="248"/>
        <end position="435"/>
    </location>
</feature>
<feature type="active site" description="Nucleophile" evidence="1">
    <location>
        <position position="329"/>
    </location>
</feature>
<feature type="active site" evidence="1">
    <location>
        <position position="427"/>
    </location>
</feature>
<accession>C1DPP2</accession>
<comment type="function">
    <text evidence="1">Catalyzes amidations at positions B, D, E, and G on adenosylcobyrinic A,C-diamide. NH(2) groups are provided by glutamine, and one molecule of ATP is hydrogenolyzed for each amidation.</text>
</comment>
<comment type="pathway">
    <text evidence="1">Cofactor biosynthesis; adenosylcobalamin biosynthesis.</text>
</comment>
<comment type="similarity">
    <text evidence="1">Belongs to the CobB/CobQ family. CobQ subfamily.</text>
</comment>
<organism>
    <name type="scientific">Azotobacter vinelandii (strain DJ / ATCC BAA-1303)</name>
    <dbReference type="NCBI Taxonomy" id="322710"/>
    <lineage>
        <taxon>Bacteria</taxon>
        <taxon>Pseudomonadati</taxon>
        <taxon>Pseudomonadota</taxon>
        <taxon>Gammaproteobacteria</taxon>
        <taxon>Pseudomonadales</taxon>
        <taxon>Pseudomonadaceae</taxon>
        <taxon>Azotobacter</taxon>
    </lineage>
</organism>
<name>COBQ_AZOVD</name>
<reference key="1">
    <citation type="journal article" date="2009" name="J. Bacteriol.">
        <title>Genome sequence of Azotobacter vinelandii, an obligate aerobe specialized to support diverse anaerobic metabolic processes.</title>
        <authorList>
            <person name="Setubal J.C."/>
            <person name="Dos Santos P."/>
            <person name="Goldman B.S."/>
            <person name="Ertesvaag H."/>
            <person name="Espin G."/>
            <person name="Rubio L.M."/>
            <person name="Valla S."/>
            <person name="Almeida N.F."/>
            <person name="Balasubramanian D."/>
            <person name="Cromes L."/>
            <person name="Curatti L."/>
            <person name="Du Z."/>
            <person name="Godsy E."/>
            <person name="Goodner B."/>
            <person name="Hellner-Burris K."/>
            <person name="Hernandez J.A."/>
            <person name="Houmiel K."/>
            <person name="Imperial J."/>
            <person name="Kennedy C."/>
            <person name="Larson T.J."/>
            <person name="Latreille P."/>
            <person name="Ligon L.S."/>
            <person name="Lu J."/>
            <person name="Maerk M."/>
            <person name="Miller N.M."/>
            <person name="Norton S."/>
            <person name="O'Carroll I.P."/>
            <person name="Paulsen I."/>
            <person name="Raulfs E.C."/>
            <person name="Roemer R."/>
            <person name="Rosser J."/>
            <person name="Segura D."/>
            <person name="Slater S."/>
            <person name="Stricklin S.L."/>
            <person name="Studholme D.J."/>
            <person name="Sun J."/>
            <person name="Viana C.J."/>
            <person name="Wallin E."/>
            <person name="Wang B."/>
            <person name="Wheeler C."/>
            <person name="Zhu H."/>
            <person name="Dean D.R."/>
            <person name="Dixon R."/>
            <person name="Wood D."/>
        </authorList>
    </citation>
    <scope>NUCLEOTIDE SEQUENCE [LARGE SCALE GENOMIC DNA]</scope>
    <source>
        <strain>DJ / ATCC BAA-1303</strain>
    </source>
</reference>
<gene>
    <name evidence="1" type="primary">cobQ</name>
    <name type="ordered locus">Avin_33080</name>
</gene>
<keyword id="KW-0169">Cobalamin biosynthesis</keyword>
<keyword id="KW-0315">Glutamine amidotransferase</keyword>
<evidence type="ECO:0000255" key="1">
    <source>
        <dbReference type="HAMAP-Rule" id="MF_00028"/>
    </source>
</evidence>
<dbReference type="EMBL" id="CP001157">
    <property type="protein sequence ID" value="ACO79463.1"/>
    <property type="molecule type" value="Genomic_DNA"/>
</dbReference>
<dbReference type="RefSeq" id="WP_012701847.1">
    <property type="nucleotide sequence ID" value="NC_012560.1"/>
</dbReference>
<dbReference type="SMR" id="C1DPP2"/>
<dbReference type="STRING" id="322710.Avin_33080"/>
<dbReference type="EnsemblBacteria" id="ACO79463">
    <property type="protein sequence ID" value="ACO79463"/>
    <property type="gene ID" value="Avin_33080"/>
</dbReference>
<dbReference type="GeneID" id="88186347"/>
<dbReference type="KEGG" id="avn:Avin_33080"/>
<dbReference type="eggNOG" id="COG1492">
    <property type="taxonomic scope" value="Bacteria"/>
</dbReference>
<dbReference type="HOGENOM" id="CLU_019250_2_2_6"/>
<dbReference type="OrthoDB" id="9808302at2"/>
<dbReference type="UniPathway" id="UPA00148"/>
<dbReference type="Proteomes" id="UP000002424">
    <property type="component" value="Chromosome"/>
</dbReference>
<dbReference type="GO" id="GO:0015420">
    <property type="term" value="F:ABC-type vitamin B12 transporter activity"/>
    <property type="evidence" value="ECO:0007669"/>
    <property type="project" value="UniProtKB-UniRule"/>
</dbReference>
<dbReference type="GO" id="GO:0003824">
    <property type="term" value="F:catalytic activity"/>
    <property type="evidence" value="ECO:0007669"/>
    <property type="project" value="InterPro"/>
</dbReference>
<dbReference type="GO" id="GO:0009236">
    <property type="term" value="P:cobalamin biosynthetic process"/>
    <property type="evidence" value="ECO:0007669"/>
    <property type="project" value="UniProtKB-UniRule"/>
</dbReference>
<dbReference type="CDD" id="cd05389">
    <property type="entry name" value="CobQ_N"/>
    <property type="match status" value="1"/>
</dbReference>
<dbReference type="CDD" id="cd01750">
    <property type="entry name" value="GATase1_CobQ"/>
    <property type="match status" value="1"/>
</dbReference>
<dbReference type="Gene3D" id="3.40.50.880">
    <property type="match status" value="1"/>
</dbReference>
<dbReference type="Gene3D" id="3.40.50.300">
    <property type="entry name" value="P-loop containing nucleotide triphosphate hydrolases"/>
    <property type="match status" value="1"/>
</dbReference>
<dbReference type="HAMAP" id="MF_00028">
    <property type="entry name" value="CobQ"/>
    <property type="match status" value="1"/>
</dbReference>
<dbReference type="InterPro" id="IPR029062">
    <property type="entry name" value="Class_I_gatase-like"/>
</dbReference>
<dbReference type="InterPro" id="IPR002586">
    <property type="entry name" value="CobQ/CobB/MinD/ParA_Nub-bd_dom"/>
</dbReference>
<dbReference type="InterPro" id="IPR033949">
    <property type="entry name" value="CobQ_GATase1"/>
</dbReference>
<dbReference type="InterPro" id="IPR047045">
    <property type="entry name" value="CobQ_N"/>
</dbReference>
<dbReference type="InterPro" id="IPR004459">
    <property type="entry name" value="CobQ_synth"/>
</dbReference>
<dbReference type="InterPro" id="IPR011698">
    <property type="entry name" value="GATase_3"/>
</dbReference>
<dbReference type="InterPro" id="IPR027417">
    <property type="entry name" value="P-loop_NTPase"/>
</dbReference>
<dbReference type="NCBIfam" id="TIGR00313">
    <property type="entry name" value="cobQ"/>
    <property type="match status" value="1"/>
</dbReference>
<dbReference type="NCBIfam" id="NF001989">
    <property type="entry name" value="PRK00784.1"/>
    <property type="match status" value="1"/>
</dbReference>
<dbReference type="PANTHER" id="PTHR21343:SF1">
    <property type="entry name" value="COBYRIC ACID SYNTHASE"/>
    <property type="match status" value="1"/>
</dbReference>
<dbReference type="PANTHER" id="PTHR21343">
    <property type="entry name" value="DETHIOBIOTIN SYNTHETASE"/>
    <property type="match status" value="1"/>
</dbReference>
<dbReference type="Pfam" id="PF01656">
    <property type="entry name" value="CbiA"/>
    <property type="match status" value="1"/>
</dbReference>
<dbReference type="Pfam" id="PF07685">
    <property type="entry name" value="GATase_3"/>
    <property type="match status" value="1"/>
</dbReference>
<dbReference type="SUPFAM" id="SSF52317">
    <property type="entry name" value="Class I glutamine amidotransferase-like"/>
    <property type="match status" value="1"/>
</dbReference>
<dbReference type="SUPFAM" id="SSF52540">
    <property type="entry name" value="P-loop containing nucleoside triphosphate hydrolases"/>
    <property type="match status" value="1"/>
</dbReference>
<dbReference type="PROSITE" id="PS51274">
    <property type="entry name" value="GATASE_COBBQ"/>
    <property type="match status" value="1"/>
</dbReference>
<protein>
    <recommendedName>
        <fullName evidence="1">Cobyric acid synthase</fullName>
    </recommendedName>
</protein>
<sequence length="485" mass="51636">MTTLMVQGTTSDAGKSTLVTALCRWLARQGVAVAPFKPQNMALNSAVTADGGEIGRAQAVQAQACGLAPHTDMNPVLLKPDSDTGAQVIVHGRAVACMDAAAYHDYKRVAREAVLASHRRLAERYRVVMVEGAGSPAEINLRANDIANMGFAEAVDCPVILVADIDKGGVFAHLVGTLALLSASEQARVEGFVINRFRGDIALLEPGLDWLETHTGKPVLGVLPYLHDLHLEAEDAIDDRQPAKTGERLKVAVAVPPRISNHTDFDPLRLHPQVDLVFVGPGQRIPPADLIVLPGSKSVRSDLAFLREQGWEAAIRRHLRYGGKLLGICGGLQMLGGRIADPLGLEGAPGESRGLGLLDIDTVLEAEKQLRNVRGRLALEGAPVSGYEIHAGVSRGAGLDRPALGLDDGRCDGALSEDGQVLGTYLHGLFESPAACDALLRWAGLREVASPDYHALRERDIERLADLVEAHLDGARLRALCGLSG</sequence>
<proteinExistence type="inferred from homology"/>